<proteinExistence type="evidence at protein level"/>
<keyword id="KW-0002">3D-structure</keyword>
<keyword id="KW-0007">Acetylation</keyword>
<keyword id="KW-0025">Alternative splicing</keyword>
<keyword id="KW-0209">Deafness</keyword>
<keyword id="KW-0903">Direct protein sequencing</keyword>
<keyword id="KW-0225">Disease variant</keyword>
<keyword id="KW-0276">Fatty acid metabolism</keyword>
<keyword id="KW-0413">Isomerase</keyword>
<keyword id="KW-0443">Lipid metabolism</keyword>
<keyword id="KW-0456">Lyase</keyword>
<keyword id="KW-0520">NAD</keyword>
<keyword id="KW-0560">Oxidoreductase</keyword>
<keyword id="KW-0576">Peroxisome</keyword>
<keyword id="KW-0597">Phosphoprotein</keyword>
<keyword id="KW-1267">Proteomics identification</keyword>
<keyword id="KW-1185">Reference proteome</keyword>
<dbReference type="EC" id="1.1.1.n12" evidence="15"/>
<dbReference type="EC" id="4.2.1.107" evidence="7 16"/>
<dbReference type="EC" id="4.2.1.119" evidence="15"/>
<dbReference type="EMBL" id="X87176">
    <property type="protein sequence ID" value="CAA60643.1"/>
    <property type="molecule type" value="mRNA"/>
</dbReference>
<dbReference type="EMBL" id="AF057740">
    <property type="protein sequence ID" value="AAD08652.1"/>
    <property type="molecule type" value="Genomic_DNA"/>
</dbReference>
<dbReference type="EMBL" id="AF057720">
    <property type="protein sequence ID" value="AAD08652.1"/>
    <property type="status" value="JOINED"/>
    <property type="molecule type" value="Genomic_DNA"/>
</dbReference>
<dbReference type="EMBL" id="AF057721">
    <property type="protein sequence ID" value="AAD08652.1"/>
    <property type="status" value="JOINED"/>
    <property type="molecule type" value="Genomic_DNA"/>
</dbReference>
<dbReference type="EMBL" id="AF057722">
    <property type="protein sequence ID" value="AAD08652.1"/>
    <property type="status" value="JOINED"/>
    <property type="molecule type" value="Genomic_DNA"/>
</dbReference>
<dbReference type="EMBL" id="AF057723">
    <property type="protein sequence ID" value="AAD08652.1"/>
    <property type="status" value="JOINED"/>
    <property type="molecule type" value="Genomic_DNA"/>
</dbReference>
<dbReference type="EMBL" id="AF057724">
    <property type="protein sequence ID" value="AAD08652.1"/>
    <property type="status" value="JOINED"/>
    <property type="molecule type" value="Genomic_DNA"/>
</dbReference>
<dbReference type="EMBL" id="AF057725">
    <property type="protein sequence ID" value="AAD08652.1"/>
    <property type="status" value="JOINED"/>
    <property type="molecule type" value="Genomic_DNA"/>
</dbReference>
<dbReference type="EMBL" id="AF057726">
    <property type="protein sequence ID" value="AAD08652.1"/>
    <property type="status" value="JOINED"/>
    <property type="molecule type" value="Genomic_DNA"/>
</dbReference>
<dbReference type="EMBL" id="AF057727">
    <property type="protein sequence ID" value="AAD08652.1"/>
    <property type="status" value="JOINED"/>
    <property type="molecule type" value="Genomic_DNA"/>
</dbReference>
<dbReference type="EMBL" id="AF057728">
    <property type="protein sequence ID" value="AAD08652.1"/>
    <property type="status" value="JOINED"/>
    <property type="molecule type" value="Genomic_DNA"/>
</dbReference>
<dbReference type="EMBL" id="AF057729">
    <property type="protein sequence ID" value="AAD08652.1"/>
    <property type="status" value="JOINED"/>
    <property type="molecule type" value="Genomic_DNA"/>
</dbReference>
<dbReference type="EMBL" id="AF057730">
    <property type="protein sequence ID" value="AAD08652.1"/>
    <property type="status" value="JOINED"/>
    <property type="molecule type" value="Genomic_DNA"/>
</dbReference>
<dbReference type="EMBL" id="AF057731">
    <property type="protein sequence ID" value="AAD08652.1"/>
    <property type="status" value="JOINED"/>
    <property type="molecule type" value="Genomic_DNA"/>
</dbReference>
<dbReference type="EMBL" id="AF057732">
    <property type="protein sequence ID" value="AAD08652.1"/>
    <property type="status" value="JOINED"/>
    <property type="molecule type" value="Genomic_DNA"/>
</dbReference>
<dbReference type="EMBL" id="AF057733">
    <property type="protein sequence ID" value="AAD08652.1"/>
    <property type="status" value="JOINED"/>
    <property type="molecule type" value="Genomic_DNA"/>
</dbReference>
<dbReference type="EMBL" id="AF057734">
    <property type="protein sequence ID" value="AAD08652.1"/>
    <property type="status" value="JOINED"/>
    <property type="molecule type" value="Genomic_DNA"/>
</dbReference>
<dbReference type="EMBL" id="AF057735">
    <property type="protein sequence ID" value="AAD08652.1"/>
    <property type="status" value="JOINED"/>
    <property type="molecule type" value="Genomic_DNA"/>
</dbReference>
<dbReference type="EMBL" id="AF057736">
    <property type="protein sequence ID" value="AAD08652.1"/>
    <property type="status" value="JOINED"/>
    <property type="molecule type" value="Genomic_DNA"/>
</dbReference>
<dbReference type="EMBL" id="AF057737">
    <property type="protein sequence ID" value="AAD08652.1"/>
    <property type="status" value="JOINED"/>
    <property type="molecule type" value="Genomic_DNA"/>
</dbReference>
<dbReference type="EMBL" id="AF057738">
    <property type="protein sequence ID" value="AAD08652.1"/>
    <property type="status" value="JOINED"/>
    <property type="molecule type" value="Genomic_DNA"/>
</dbReference>
<dbReference type="EMBL" id="AF057739">
    <property type="protein sequence ID" value="AAD08652.1"/>
    <property type="status" value="JOINED"/>
    <property type="molecule type" value="Genomic_DNA"/>
</dbReference>
<dbReference type="EMBL" id="AK298075">
    <property type="protein sequence ID" value="BAG60363.1"/>
    <property type="molecule type" value="mRNA"/>
</dbReference>
<dbReference type="EMBL" id="AK301212">
    <property type="protein sequence ID" value="BAG62787.1"/>
    <property type="molecule type" value="mRNA"/>
</dbReference>
<dbReference type="EMBL" id="AC024564">
    <property type="status" value="NOT_ANNOTATED_CDS"/>
    <property type="molecule type" value="Genomic_DNA"/>
</dbReference>
<dbReference type="EMBL" id="BC003098">
    <property type="protein sequence ID" value="AAH03098.1"/>
    <property type="molecule type" value="mRNA"/>
</dbReference>
<dbReference type="CCDS" id="CCDS4126.1">
    <molecule id="P51659-1"/>
</dbReference>
<dbReference type="CCDS" id="CCDS56378.1">
    <molecule id="P51659-3"/>
</dbReference>
<dbReference type="CCDS" id="CCDS56379.1">
    <molecule id="P51659-2"/>
</dbReference>
<dbReference type="PIR" id="S59136">
    <property type="entry name" value="S59136"/>
</dbReference>
<dbReference type="RefSeq" id="NP_000405.1">
    <molecule id="P51659-1"/>
    <property type="nucleotide sequence ID" value="NM_000414.4"/>
</dbReference>
<dbReference type="RefSeq" id="NP_001186220.1">
    <molecule id="P51659-2"/>
    <property type="nucleotide sequence ID" value="NM_001199291.3"/>
</dbReference>
<dbReference type="RefSeq" id="NP_001186221.1">
    <molecule id="P51659-3"/>
    <property type="nucleotide sequence ID" value="NM_001199292.2"/>
</dbReference>
<dbReference type="RefSeq" id="NP_001278956.1">
    <property type="nucleotide sequence ID" value="NM_001292027.1"/>
</dbReference>
<dbReference type="RefSeq" id="NP_001278957.1">
    <property type="nucleotide sequence ID" value="NM_001292028.1"/>
</dbReference>
<dbReference type="PDB" id="1IKT">
    <property type="method" value="X-ray"/>
    <property type="resolution" value="1.75 A"/>
    <property type="chains" value="A=618-736"/>
</dbReference>
<dbReference type="PDB" id="1S9C">
    <property type="method" value="X-ray"/>
    <property type="resolution" value="3.00 A"/>
    <property type="chains" value="A/B/C/D/E/F/G/H/I/J/K/L=318-615"/>
</dbReference>
<dbReference type="PDB" id="1ZBQ">
    <property type="method" value="X-ray"/>
    <property type="resolution" value="2.71 A"/>
    <property type="chains" value="A/B/C/D/E/F=1-304"/>
</dbReference>
<dbReference type="PDB" id="6Z1W">
    <property type="method" value="X-ray"/>
    <property type="resolution" value="2.48 A"/>
    <property type="chains" value="A=618-736"/>
</dbReference>
<dbReference type="PDB" id="6Z1X">
    <property type="method" value="X-ray"/>
    <property type="resolution" value="2.09 A"/>
    <property type="chains" value="A=618-736"/>
</dbReference>
<dbReference type="PDB" id="8AF2">
    <property type="method" value="X-ray"/>
    <property type="resolution" value="2.51 A"/>
    <property type="chains" value="A/B=618-736"/>
</dbReference>
<dbReference type="PDB" id="8AF3">
    <property type="method" value="X-ray"/>
    <property type="resolution" value="1.52 A"/>
    <property type="chains" value="A=618-736"/>
</dbReference>
<dbReference type="PDBsum" id="1IKT"/>
<dbReference type="PDBsum" id="1S9C"/>
<dbReference type="PDBsum" id="1ZBQ"/>
<dbReference type="PDBsum" id="6Z1W"/>
<dbReference type="PDBsum" id="6Z1X"/>
<dbReference type="PDBsum" id="8AF2"/>
<dbReference type="PDBsum" id="8AF3"/>
<dbReference type="SASBDB" id="P51659"/>
<dbReference type="SMR" id="P51659"/>
<dbReference type="BioGRID" id="109528">
    <property type="interactions" value="196"/>
</dbReference>
<dbReference type="FunCoup" id="P51659">
    <property type="interactions" value="840"/>
</dbReference>
<dbReference type="IntAct" id="P51659">
    <property type="interactions" value="76"/>
</dbReference>
<dbReference type="MINT" id="P51659"/>
<dbReference type="STRING" id="9606.ENSP00000411960"/>
<dbReference type="BindingDB" id="P51659"/>
<dbReference type="ChEMBL" id="CHEMBL5814"/>
<dbReference type="DrugBank" id="DB03192">
    <property type="generic name" value="(R)-3-hydroxydecanoyl-CoA"/>
</dbReference>
<dbReference type="DrugBank" id="DB00157">
    <property type="generic name" value="NADH"/>
</dbReference>
<dbReference type="SwissLipids" id="SLP:000000540"/>
<dbReference type="GlyGen" id="P51659">
    <property type="glycosylation" value="5 sites, 1 N-linked glycan (1 site), 1 O-linked glycan (4 sites)"/>
</dbReference>
<dbReference type="iPTMnet" id="P51659"/>
<dbReference type="PhosphoSitePlus" id="P51659"/>
<dbReference type="SwissPalm" id="P51659"/>
<dbReference type="BioMuta" id="HSD17B4"/>
<dbReference type="DMDM" id="1706396"/>
<dbReference type="CPTAC" id="CPTAC-389"/>
<dbReference type="CPTAC" id="CPTAC-390"/>
<dbReference type="jPOST" id="P51659"/>
<dbReference type="MassIVE" id="P51659"/>
<dbReference type="PaxDb" id="9606-ENSP00000420914"/>
<dbReference type="PeptideAtlas" id="P51659"/>
<dbReference type="ProteomicsDB" id="19165"/>
<dbReference type="ProteomicsDB" id="27834"/>
<dbReference type="ProteomicsDB" id="56360">
    <molecule id="P51659-1"/>
</dbReference>
<dbReference type="Pumba" id="P51659"/>
<dbReference type="TopDownProteomics" id="P51659-1">
    <molecule id="P51659-1"/>
</dbReference>
<dbReference type="Antibodypedia" id="13742">
    <property type="antibodies" value="421 antibodies from 34 providers"/>
</dbReference>
<dbReference type="DNASU" id="3295"/>
<dbReference type="Ensembl" id="ENST00000414835.7">
    <molecule id="P51659-2"/>
    <property type="protein sequence ID" value="ENSP00000411960.3"/>
    <property type="gene ID" value="ENSG00000133835.18"/>
</dbReference>
<dbReference type="Ensembl" id="ENST00000510025.7">
    <molecule id="P51659-1"/>
    <property type="protein sequence ID" value="ENSP00000424940.3"/>
    <property type="gene ID" value="ENSG00000133835.18"/>
</dbReference>
<dbReference type="Ensembl" id="ENST00000515320.5">
    <molecule id="P51659-3"/>
    <property type="protein sequence ID" value="ENSP00000424613.1"/>
    <property type="gene ID" value="ENSG00000133835.18"/>
</dbReference>
<dbReference type="GeneID" id="3295"/>
<dbReference type="KEGG" id="hsa:3295"/>
<dbReference type="MANE-Select" id="ENST00000510025.7">
    <property type="protein sequence ID" value="ENSP00000424940.3"/>
    <property type="RefSeq nucleotide sequence ID" value="NM_000414.4"/>
    <property type="RefSeq protein sequence ID" value="NP_000405.1"/>
</dbReference>
<dbReference type="UCSC" id="uc003ksj.4">
    <molecule id="P51659-1"/>
    <property type="organism name" value="human"/>
</dbReference>
<dbReference type="AGR" id="HGNC:5213"/>
<dbReference type="CTD" id="3295"/>
<dbReference type="DisGeNET" id="3295"/>
<dbReference type="GeneCards" id="HSD17B4"/>
<dbReference type="GeneReviews" id="HSD17B4"/>
<dbReference type="HGNC" id="HGNC:5213">
    <property type="gene designation" value="HSD17B4"/>
</dbReference>
<dbReference type="HPA" id="ENSG00000133835">
    <property type="expression patterns" value="Tissue enhanced (liver)"/>
</dbReference>
<dbReference type="MalaCards" id="HSD17B4"/>
<dbReference type="MIM" id="233400">
    <property type="type" value="phenotype"/>
</dbReference>
<dbReference type="MIM" id="261515">
    <property type="type" value="phenotype"/>
</dbReference>
<dbReference type="MIM" id="601860">
    <property type="type" value="gene"/>
</dbReference>
<dbReference type="neXtProt" id="NX_P51659"/>
<dbReference type="OpenTargets" id="ENSG00000133835"/>
<dbReference type="Orphanet" id="300">
    <property type="disease" value="Bifunctional enzyme deficiency"/>
</dbReference>
<dbReference type="Orphanet" id="642945">
    <property type="disease" value="Perrault syndrome type 1"/>
</dbReference>
<dbReference type="Orphanet" id="642976">
    <property type="disease" value="Perrault syndrome type 2"/>
</dbReference>
<dbReference type="PharmGKB" id="PA29481"/>
<dbReference type="VEuPathDB" id="HostDB:ENSG00000133835"/>
<dbReference type="eggNOG" id="KOG1206">
    <property type="taxonomic scope" value="Eukaryota"/>
</dbReference>
<dbReference type="GeneTree" id="ENSGT00940000158343"/>
<dbReference type="HOGENOM" id="CLU_010194_18_4_1"/>
<dbReference type="InParanoid" id="P51659"/>
<dbReference type="OMA" id="GKTRWQR"/>
<dbReference type="OrthoDB" id="3592703at2759"/>
<dbReference type="PAN-GO" id="P51659">
    <property type="GO annotations" value="5 GO annotations based on evolutionary models"/>
</dbReference>
<dbReference type="PhylomeDB" id="P51659"/>
<dbReference type="TreeFam" id="TF105656"/>
<dbReference type="BioCyc" id="MetaCyc:HS05792-MONOMER"/>
<dbReference type="BRENDA" id="4.2.1.119">
    <property type="organism ID" value="2681"/>
</dbReference>
<dbReference type="PathwayCommons" id="P51659"/>
<dbReference type="Reactome" id="R-HSA-193368">
    <property type="pathway name" value="Synthesis of bile acids and bile salts via 7alpha-hydroxycholesterol"/>
</dbReference>
<dbReference type="Reactome" id="R-HSA-2046106">
    <property type="pathway name" value="alpha-linolenic acid (ALA) metabolism"/>
</dbReference>
<dbReference type="Reactome" id="R-HSA-389887">
    <property type="pathway name" value="Beta-oxidation of pristanoyl-CoA"/>
</dbReference>
<dbReference type="Reactome" id="R-HSA-390247">
    <property type="pathway name" value="Beta-oxidation of very long chain fatty acids"/>
</dbReference>
<dbReference type="Reactome" id="R-HSA-9033241">
    <property type="pathway name" value="Peroxisomal protein import"/>
</dbReference>
<dbReference type="Reactome" id="R-HSA-9033500">
    <property type="pathway name" value="TYSND1 cleaves peroxisomal proteins"/>
</dbReference>
<dbReference type="SABIO-RK" id="P51659"/>
<dbReference type="SignaLink" id="P51659"/>
<dbReference type="UniPathway" id="UPA00659"/>
<dbReference type="BioGRID-ORCS" id="3295">
    <property type="hits" value="47 hits in 1171 CRISPR screens"/>
</dbReference>
<dbReference type="CD-CODE" id="91857CE7">
    <property type="entry name" value="Nucleolus"/>
</dbReference>
<dbReference type="CD-CODE" id="FB4E32DD">
    <property type="entry name" value="Presynaptic clusters and postsynaptic densities"/>
</dbReference>
<dbReference type="ChiTaRS" id="HSD17B4">
    <property type="organism name" value="human"/>
</dbReference>
<dbReference type="EvolutionaryTrace" id="P51659"/>
<dbReference type="GeneWiki" id="HSD17B4"/>
<dbReference type="GenomeRNAi" id="3295"/>
<dbReference type="Pharos" id="P51659">
    <property type="development level" value="Tbio"/>
</dbReference>
<dbReference type="PRO" id="PR:P51659"/>
<dbReference type="Proteomes" id="UP000005640">
    <property type="component" value="Chromosome 5"/>
</dbReference>
<dbReference type="RNAct" id="P51659">
    <property type="molecule type" value="protein"/>
</dbReference>
<dbReference type="Bgee" id="ENSG00000133835">
    <property type="expression patterns" value="Expressed in right lobe of thyroid gland and 203 other cell types or tissues"/>
</dbReference>
<dbReference type="ExpressionAtlas" id="P51659">
    <property type="expression patterns" value="baseline and differential"/>
</dbReference>
<dbReference type="GO" id="GO:0005829">
    <property type="term" value="C:cytosol"/>
    <property type="evidence" value="ECO:0000304"/>
    <property type="project" value="Reactome"/>
</dbReference>
<dbReference type="GO" id="GO:0016020">
    <property type="term" value="C:membrane"/>
    <property type="evidence" value="ECO:0007005"/>
    <property type="project" value="UniProtKB"/>
</dbReference>
<dbReference type="GO" id="GO:0005782">
    <property type="term" value="C:peroxisomal matrix"/>
    <property type="evidence" value="ECO:0000304"/>
    <property type="project" value="Reactome"/>
</dbReference>
<dbReference type="GO" id="GO:0005778">
    <property type="term" value="C:peroxisomal membrane"/>
    <property type="evidence" value="ECO:0007005"/>
    <property type="project" value="UniProtKB"/>
</dbReference>
<dbReference type="GO" id="GO:0005777">
    <property type="term" value="C:peroxisome"/>
    <property type="evidence" value="ECO:0000314"/>
    <property type="project" value="HPA"/>
</dbReference>
<dbReference type="GO" id="GO:0106386">
    <property type="term" value="F:(3R)-hydroxyacyl-CoA dehydrogenase (NAD+) activity"/>
    <property type="evidence" value="ECO:0007669"/>
    <property type="project" value="RHEA"/>
</dbReference>
<dbReference type="GO" id="GO:0044594">
    <property type="term" value="F:17-beta-hydroxysteroid dehydrogenase (NAD+) activity"/>
    <property type="evidence" value="ECO:0000318"/>
    <property type="project" value="GO_Central"/>
</dbReference>
<dbReference type="GO" id="GO:0018812">
    <property type="term" value="F:3-hydroxyacyl-CoA dehydratase activity"/>
    <property type="evidence" value="ECO:0000314"/>
    <property type="project" value="UniProtKB"/>
</dbReference>
<dbReference type="GO" id="GO:0003857">
    <property type="term" value="F:3-hydroxyacyl-CoA dehydrogenase activity"/>
    <property type="evidence" value="ECO:0000314"/>
    <property type="project" value="UniProtKB"/>
</dbReference>
<dbReference type="GO" id="GO:0033989">
    <property type="term" value="F:3alpha,7alpha,12alpha-trihydroxy-5beta-cholest-24-enoyl-CoA hydratase activity"/>
    <property type="evidence" value="ECO:0007669"/>
    <property type="project" value="UniProtKB-EC"/>
</dbReference>
<dbReference type="GO" id="GO:0004300">
    <property type="term" value="F:enoyl-CoA hydratase activity"/>
    <property type="evidence" value="ECO:0000314"/>
    <property type="project" value="UniProtKB"/>
</dbReference>
<dbReference type="GO" id="GO:0004303">
    <property type="term" value="F:estradiol 17-beta-dehydrogenase [NAD(P)+] activity"/>
    <property type="evidence" value="ECO:0000314"/>
    <property type="project" value="UniProtKB"/>
</dbReference>
<dbReference type="GO" id="GO:0016853">
    <property type="term" value="F:isomerase activity"/>
    <property type="evidence" value="ECO:0007669"/>
    <property type="project" value="UniProtKB-KW"/>
</dbReference>
<dbReference type="GO" id="GO:0042803">
    <property type="term" value="F:protein homodimerization activity"/>
    <property type="evidence" value="ECO:0000314"/>
    <property type="project" value="UniProtKB"/>
</dbReference>
<dbReference type="GO" id="GO:0036109">
    <property type="term" value="P:alpha-linolenic acid metabolic process"/>
    <property type="evidence" value="ECO:0007669"/>
    <property type="project" value="Ensembl"/>
</dbReference>
<dbReference type="GO" id="GO:0008209">
    <property type="term" value="P:androgen metabolic process"/>
    <property type="evidence" value="ECO:0000314"/>
    <property type="project" value="UniProtKB"/>
</dbReference>
<dbReference type="GO" id="GO:0008210">
    <property type="term" value="P:estrogen metabolic process"/>
    <property type="evidence" value="ECO:0000314"/>
    <property type="project" value="UniProtKB"/>
</dbReference>
<dbReference type="GO" id="GO:0006635">
    <property type="term" value="P:fatty acid beta-oxidation"/>
    <property type="evidence" value="ECO:0000314"/>
    <property type="project" value="UniProtKB"/>
</dbReference>
<dbReference type="GO" id="GO:0033540">
    <property type="term" value="P:fatty acid beta-oxidation using acyl-CoA oxidase"/>
    <property type="evidence" value="ECO:0007669"/>
    <property type="project" value="Ensembl"/>
</dbReference>
<dbReference type="GO" id="GO:1901570">
    <property type="term" value="P:fatty acid derivative biosynthetic process"/>
    <property type="evidence" value="ECO:0007669"/>
    <property type="project" value="Ensembl"/>
</dbReference>
<dbReference type="GO" id="GO:0042759">
    <property type="term" value="P:long-chain fatty acid biosynthetic process"/>
    <property type="evidence" value="ECO:0007669"/>
    <property type="project" value="Ensembl"/>
</dbReference>
<dbReference type="GO" id="GO:0036112">
    <property type="term" value="P:medium-chain fatty-acyl-CoA metabolic process"/>
    <property type="evidence" value="ECO:0000314"/>
    <property type="project" value="UniProtKB"/>
</dbReference>
<dbReference type="GO" id="GO:0001649">
    <property type="term" value="P:osteoblast differentiation"/>
    <property type="evidence" value="ECO:0007005"/>
    <property type="project" value="UniProtKB"/>
</dbReference>
<dbReference type="GO" id="GO:0060009">
    <property type="term" value="P:Sertoli cell development"/>
    <property type="evidence" value="ECO:0007669"/>
    <property type="project" value="Ensembl"/>
</dbReference>
<dbReference type="GO" id="GO:0006636">
    <property type="term" value="P:unsaturated fatty acid biosynthetic process"/>
    <property type="evidence" value="ECO:0007669"/>
    <property type="project" value="Ensembl"/>
</dbReference>
<dbReference type="GO" id="GO:0000038">
    <property type="term" value="P:very long-chain fatty acid metabolic process"/>
    <property type="evidence" value="ECO:0007669"/>
    <property type="project" value="Ensembl"/>
</dbReference>
<dbReference type="GO" id="GO:0036111">
    <property type="term" value="P:very long-chain fatty-acyl-CoA metabolic process"/>
    <property type="evidence" value="ECO:0000314"/>
    <property type="project" value="UniProtKB"/>
</dbReference>
<dbReference type="CDD" id="cd03448">
    <property type="entry name" value="HDE_HSD"/>
    <property type="match status" value="1"/>
</dbReference>
<dbReference type="CDD" id="cd05353">
    <property type="entry name" value="hydroxyacyl-CoA-like_DH_SDR_c-like"/>
    <property type="match status" value="1"/>
</dbReference>
<dbReference type="FunFam" id="3.30.1050.10:FF:000004">
    <property type="entry name" value="Hydroxysteroid 17-beta dehydrogenase 4"/>
    <property type="match status" value="1"/>
</dbReference>
<dbReference type="FunFam" id="3.40.50.720:FF:000267">
    <property type="entry name" value="Hydroxysteroid 17-beta dehydrogenase 4"/>
    <property type="match status" value="1"/>
</dbReference>
<dbReference type="FunFam" id="1.10.287.4290:FF:000001">
    <property type="entry name" value="Peroxisomal multifunctional enzyme type 2"/>
    <property type="match status" value="1"/>
</dbReference>
<dbReference type="FunFam" id="3.10.129.10:FF:000013">
    <property type="entry name" value="Peroxisomal multifunctional enzyme type 2"/>
    <property type="match status" value="1"/>
</dbReference>
<dbReference type="FunFam" id="3.10.129.10:FF:000019">
    <property type="entry name" value="peroxisomal multifunctional enzyme type 2"/>
    <property type="match status" value="1"/>
</dbReference>
<dbReference type="FunFam" id="3.40.50.720:FF:000185">
    <property type="entry name" value="peroxisomal multifunctional enzyme type 2"/>
    <property type="match status" value="1"/>
</dbReference>
<dbReference type="Gene3D" id="1.10.287.4290">
    <property type="match status" value="1"/>
</dbReference>
<dbReference type="Gene3D" id="3.10.129.10">
    <property type="entry name" value="Hotdog Thioesterase"/>
    <property type="match status" value="2"/>
</dbReference>
<dbReference type="Gene3D" id="3.40.50.720">
    <property type="entry name" value="NAD(P)-binding Rossmann-like Domain"/>
    <property type="match status" value="1"/>
</dbReference>
<dbReference type="Gene3D" id="3.30.1050.10">
    <property type="entry name" value="SCP2 sterol-binding domain"/>
    <property type="match status" value="1"/>
</dbReference>
<dbReference type="InterPro" id="IPR029069">
    <property type="entry name" value="HotDog_dom_sf"/>
</dbReference>
<dbReference type="InterPro" id="IPR002539">
    <property type="entry name" value="MaoC-like_dom"/>
</dbReference>
<dbReference type="InterPro" id="IPR054357">
    <property type="entry name" value="MFE-2_N"/>
</dbReference>
<dbReference type="InterPro" id="IPR036291">
    <property type="entry name" value="NAD(P)-bd_dom_sf"/>
</dbReference>
<dbReference type="InterPro" id="IPR051687">
    <property type="entry name" value="Peroxisomal_Beta-Oxidation"/>
</dbReference>
<dbReference type="InterPro" id="IPR020904">
    <property type="entry name" value="Sc_DH/Rdtase_CS"/>
</dbReference>
<dbReference type="InterPro" id="IPR003033">
    <property type="entry name" value="SCP2_sterol-bd_dom"/>
</dbReference>
<dbReference type="InterPro" id="IPR036527">
    <property type="entry name" value="SCP2_sterol-bd_dom_sf"/>
</dbReference>
<dbReference type="InterPro" id="IPR002347">
    <property type="entry name" value="SDR_fam"/>
</dbReference>
<dbReference type="PANTHER" id="PTHR45024">
    <property type="entry name" value="DEHYDROGENASES, SHORT CHAIN"/>
    <property type="match status" value="1"/>
</dbReference>
<dbReference type="PANTHER" id="PTHR45024:SF2">
    <property type="entry name" value="SCP2 DOMAIN-CONTAINING PROTEIN"/>
    <property type="match status" value="1"/>
</dbReference>
<dbReference type="Pfam" id="PF00106">
    <property type="entry name" value="adh_short"/>
    <property type="match status" value="1"/>
</dbReference>
<dbReference type="Pfam" id="PF01575">
    <property type="entry name" value="MaoC_dehydratas"/>
    <property type="match status" value="1"/>
</dbReference>
<dbReference type="Pfam" id="PF22622">
    <property type="entry name" value="MFE-2_hydrat-2_N"/>
    <property type="match status" value="1"/>
</dbReference>
<dbReference type="Pfam" id="PF02036">
    <property type="entry name" value="SCP2"/>
    <property type="match status" value="1"/>
</dbReference>
<dbReference type="PRINTS" id="PR00081">
    <property type="entry name" value="GDHRDH"/>
</dbReference>
<dbReference type="PRINTS" id="PR00080">
    <property type="entry name" value="SDRFAMILY"/>
</dbReference>
<dbReference type="SMART" id="SM00822">
    <property type="entry name" value="PKS_KR"/>
    <property type="match status" value="1"/>
</dbReference>
<dbReference type="SUPFAM" id="SSF51735">
    <property type="entry name" value="NAD(P)-binding Rossmann-fold domains"/>
    <property type="match status" value="1"/>
</dbReference>
<dbReference type="SUPFAM" id="SSF55718">
    <property type="entry name" value="SCP-like"/>
    <property type="match status" value="1"/>
</dbReference>
<dbReference type="SUPFAM" id="SSF54637">
    <property type="entry name" value="Thioesterase/thiol ester dehydrase-isomerase"/>
    <property type="match status" value="2"/>
</dbReference>
<dbReference type="PROSITE" id="PS00061">
    <property type="entry name" value="ADH_SHORT"/>
    <property type="match status" value="1"/>
</dbReference>
<feature type="chain" id="PRO_0000054583" description="Peroxisomal multifunctional enzyme type 2">
    <location>
        <begin position="1"/>
        <end position="736"/>
    </location>
</feature>
<feature type="chain" id="PRO_0000400082" description="(3R)-hydroxyacyl-CoA dehydrogenase">
    <location>
        <begin position="1"/>
        <end position="311"/>
    </location>
</feature>
<feature type="chain" id="PRO_0000400083" description="Enoyl-CoA hydratase 2">
    <location>
        <begin position="312"/>
        <end position="736"/>
    </location>
</feature>
<feature type="domain" description="MaoC-like">
    <location>
        <begin position="484"/>
        <end position="600"/>
    </location>
</feature>
<feature type="domain" description="SCP2">
    <location>
        <begin position="624"/>
        <end position="736"/>
    </location>
</feature>
<feature type="region of interest" description="(3R)-hydroxyacyl-CoA dehydrogenase">
    <location>
        <begin position="1"/>
        <end position="305"/>
    </location>
</feature>
<feature type="region of interest" description="Enoyl-CoA hydratase 2">
    <location>
        <begin position="322"/>
        <end position="622"/>
    </location>
</feature>
<feature type="short sequence motif" description="Microbody targeting signal" evidence="3">
    <location>
        <begin position="734"/>
        <end position="736"/>
    </location>
</feature>
<feature type="active site" description="Proton acceptor" evidence="4">
    <location>
        <position position="164"/>
    </location>
</feature>
<feature type="binding site" evidence="1">
    <location>
        <begin position="13"/>
        <end position="37"/>
    </location>
    <ligand>
        <name>NAD(+)</name>
        <dbReference type="ChEBI" id="CHEBI:57540"/>
    </ligand>
</feature>
<feature type="binding site">
    <location>
        <position position="21"/>
    </location>
    <ligand>
        <name>NAD(+)</name>
        <dbReference type="ChEBI" id="CHEBI:57540"/>
    </ligand>
</feature>
<feature type="binding site">
    <location>
        <position position="40"/>
    </location>
    <ligand>
        <name>NAD(+)</name>
        <dbReference type="ChEBI" id="CHEBI:57540"/>
    </ligand>
</feature>
<feature type="binding site">
    <location>
        <begin position="75"/>
        <end position="76"/>
    </location>
    <ligand>
        <name>NAD(+)</name>
        <dbReference type="ChEBI" id="CHEBI:57540"/>
    </ligand>
</feature>
<feature type="binding site">
    <location>
        <position position="99"/>
    </location>
    <ligand>
        <name>NAD(+)</name>
        <dbReference type="ChEBI" id="CHEBI:57540"/>
    </ligand>
</feature>
<feature type="binding site" evidence="1">
    <location>
        <position position="151"/>
    </location>
    <ligand>
        <name>substrate</name>
    </ligand>
</feature>
<feature type="binding site">
    <location>
        <begin position="164"/>
        <end position="168"/>
    </location>
    <ligand>
        <name>NAD(+)</name>
        <dbReference type="ChEBI" id="CHEBI:57540"/>
    </ligand>
</feature>
<feature type="binding site">
    <location>
        <begin position="196"/>
        <end position="199"/>
    </location>
    <ligand>
        <name>NAD(+)</name>
        <dbReference type="ChEBI" id="CHEBI:57540"/>
    </ligand>
</feature>
<feature type="binding site" evidence="1">
    <location>
        <begin position="406"/>
        <end position="407"/>
    </location>
    <ligand>
        <name>(3R)-3-hydroxydecanoyl-CoA</name>
        <dbReference type="ChEBI" id="CHEBI:74272"/>
    </ligand>
</feature>
<feature type="binding site" evidence="1">
    <location>
        <position position="435"/>
    </location>
    <ligand>
        <name>(3R)-3-hydroxydecanoyl-CoA</name>
        <dbReference type="ChEBI" id="CHEBI:74272"/>
    </ligand>
</feature>
<feature type="binding site" evidence="1">
    <location>
        <begin position="510"/>
        <end position="515"/>
    </location>
    <ligand>
        <name>(3R)-3-hydroxydecanoyl-CoA</name>
        <dbReference type="ChEBI" id="CHEBI:74272"/>
    </ligand>
</feature>
<feature type="binding site" evidence="1">
    <location>
        <position position="533"/>
    </location>
    <ligand>
        <name>(3R)-3-hydroxydecanoyl-CoA</name>
        <dbReference type="ChEBI" id="CHEBI:74272"/>
    </ligand>
</feature>
<feature type="binding site" evidence="1">
    <location>
        <position position="563"/>
    </location>
    <ligand>
        <name>(3R)-3-hydroxydecanoyl-CoA</name>
        <dbReference type="ChEBI" id="CHEBI:74272"/>
    </ligand>
</feature>
<feature type="binding site">
    <location>
        <position position="706"/>
    </location>
    <ligand>
        <name>substrate</name>
    </ligand>
</feature>
<feature type="binding site">
    <location>
        <position position="724"/>
    </location>
    <ligand>
        <name>substrate</name>
    </ligand>
</feature>
<feature type="modified residue" description="N6-acetyllysine; alternate" evidence="2">
    <location>
        <position position="46"/>
    </location>
</feature>
<feature type="modified residue" description="N6-succinyllysine; alternate" evidence="2">
    <location>
        <position position="46"/>
    </location>
</feature>
<feature type="modified residue" description="Phosphoserine" evidence="26">
    <location>
        <position position="52"/>
    </location>
</feature>
<feature type="modified residue" description="N6-succinyllysine" evidence="2">
    <location>
        <position position="57"/>
    </location>
</feature>
<feature type="modified residue" description="N6-succinyllysine" evidence="2">
    <location>
        <position position="68"/>
    </location>
</feature>
<feature type="modified residue" description="N6-succinyllysine" evidence="2">
    <location>
        <position position="84"/>
    </location>
</feature>
<feature type="modified residue" description="Phosphothreonine" evidence="25">
    <location>
        <position position="265"/>
    </location>
</feature>
<feature type="modified residue" description="N6-succinyllysine" evidence="2">
    <location>
        <position position="275"/>
    </location>
</feature>
<feature type="modified residue" description="Phosphoserine" evidence="23">
    <location>
        <position position="304"/>
    </location>
</feature>
<feature type="modified residue" description="Phosphoserine" evidence="23">
    <location>
        <position position="309"/>
    </location>
</feature>
<feature type="modified residue" description="N6-succinyllysine" evidence="2">
    <location>
        <position position="356"/>
    </location>
</feature>
<feature type="modified residue" description="N6-succinyllysine" evidence="2">
    <location>
        <position position="424"/>
    </location>
</feature>
<feature type="modified residue" description="N6-acetyllysine" evidence="24">
    <location>
        <position position="565"/>
    </location>
</feature>
<feature type="modified residue" description="N6-succinyllysine" evidence="2">
    <location>
        <position position="579"/>
    </location>
</feature>
<feature type="modified residue" description="N6-succinyllysine" evidence="2">
    <location>
        <position position="663"/>
    </location>
</feature>
<feature type="modified residue" description="N6-acetyllysine" evidence="24">
    <location>
        <position position="669"/>
    </location>
</feature>
<feature type="modified residue" description="N6-acetyllysine" evidence="24">
    <location>
        <position position="707"/>
    </location>
</feature>
<feature type="modified residue" description="N6-succinyllysine" evidence="2">
    <location>
        <position position="725"/>
    </location>
</feature>
<feature type="splice variant" id="VSP_046152" description="In isoform 2." evidence="18">
    <original>MGSPLRFDGRVVLVTGAGAGLGRAYALAFAERGALVVV</original>
    <variation>MVILEAPHLLRRKEPETPGLSSRIGPSLCPGFCRKRSVSCCFQNLCNNPMEKIISQCRFFVSM</variation>
    <location>
        <begin position="1"/>
        <end position="38"/>
    </location>
</feature>
<feature type="splice variant" id="VSP_046153" description="In isoform 3." evidence="18">
    <location>
        <begin position="20"/>
        <end position="37"/>
    </location>
</feature>
<feature type="sequence variant" id="VAR_037576" description="In DBPD; no dehydrogenase activity; dbSNP:rs137853096." evidence="6 16">
    <original>G</original>
    <variation>S</variation>
    <location>
        <position position="16"/>
    </location>
</feature>
<feature type="sequence variant" id="VAR_052309" description="In dbSNP:rs28943588.">
    <original>F</original>
    <variation>L</variation>
    <location>
        <position position="90"/>
    </location>
</feature>
<feature type="sequence variant" id="VAR_014872" description="In dbSNP:rs25640." evidence="10 13">
    <original>R</original>
    <variation>H</variation>
    <location>
        <position position="106"/>
    </location>
</feature>
<feature type="sequence variant" id="VAR_065906" description="In DBPD; dbSNP:rs25640." evidence="9">
    <original>R</original>
    <variation>P</variation>
    <location>
        <position position="106"/>
    </location>
</feature>
<feature type="sequence variant" id="VAR_052310" description="In dbSNP:rs28943589.">
    <original>K</original>
    <variation>N</variation>
    <location>
        <position position="140"/>
    </location>
</feature>
<feature type="sequence variant" id="VAR_065907" description="In PRLTS1; dbSNP:rs387906825." evidence="12">
    <original>Y</original>
    <variation>C</variation>
    <location>
        <position position="217"/>
    </location>
</feature>
<feature type="sequence variant" id="VAR_024625" description="In dbSNP:rs1143650.">
    <original>T</original>
    <variation>S</variation>
    <location>
        <position position="292"/>
    </location>
</feature>
<feature type="sequence variant" id="VAR_052311" description="In dbSNP:rs28943590.">
    <original>A</original>
    <variation>V</variation>
    <location>
        <position position="427"/>
    </location>
</feature>
<feature type="sequence variant" id="VAR_065908" description="In DBPD; the mutation leads to an unstable protein; dbSNP:rs137853097." evidence="5">
    <original>N</original>
    <variation>Y</variation>
    <location>
        <position position="457"/>
    </location>
</feature>
<feature type="sequence variant" id="VAR_052312" description="In dbSNP:rs28943591.">
    <original>A</original>
    <variation>T</variation>
    <location>
        <position position="491"/>
    </location>
</feature>
<feature type="sequence variant" id="VAR_014873" description="In dbSNP:rs11539471." evidence="5">
    <original>W</original>
    <variation>R</variation>
    <location>
        <position position="511"/>
    </location>
</feature>
<feature type="sequence variant" id="VAR_014874" description="In dbSNP:rs11205." evidence="10 13">
    <original>I</original>
    <variation>V</variation>
    <location>
        <position position="559"/>
    </location>
</feature>
<feature type="sequence variant" id="VAR_052313" description="In dbSNP:rs15228.">
    <original>A</original>
    <variation>S</variation>
    <location>
        <position position="606"/>
    </location>
</feature>
<feature type="sequence variant" id="VAR_052314" description="In dbSNP:rs28943592.">
    <original>T</original>
    <variation>I</variation>
    <location>
        <position position="687"/>
    </location>
</feature>
<feature type="sequence variant" id="VAR_052315" description="In dbSNP:rs28943594.">
    <original>M</original>
    <variation>V</variation>
    <location>
        <position position="728"/>
    </location>
</feature>
<feature type="mutagenesis site" description="No hydratase activity." evidence="6">
    <original>Y</original>
    <variation>A</variation>
    <location>
        <position position="347"/>
    </location>
</feature>
<feature type="mutagenesis site" description="No hydratase activity." evidence="6">
    <original>E</original>
    <variation>A</variation>
    <location>
        <position position="366"/>
    </location>
</feature>
<feature type="mutagenesis site" description="No effect." evidence="6">
    <original>D</original>
    <variation>A</variation>
    <location>
        <position position="370"/>
    </location>
</feature>
<feature type="mutagenesis site" description="No effect." evidence="6">
    <original>H</original>
    <variation>A</variation>
    <location>
        <position position="406"/>
    </location>
</feature>
<feature type="mutagenesis site" description="No effect." evidence="6">
    <original>E</original>
    <variation>A</variation>
    <location>
        <position position="408"/>
    </location>
</feature>
<feature type="mutagenesis site" description="No effect." evidence="6">
    <original>Y</original>
    <variation>A</variation>
    <location>
        <position position="410"/>
    </location>
</feature>
<feature type="mutagenesis site" description="No effect." evidence="6">
    <original>D</original>
    <variation>A</variation>
    <location>
        <position position="490"/>
    </location>
</feature>
<feature type="mutagenesis site" description="Completely inactive." evidence="6">
    <original>Y</original>
    <variation>A</variation>
    <location>
        <position position="505"/>
    </location>
</feature>
<feature type="mutagenesis site" description="No hydratase activity." evidence="6">
    <original>D</original>
    <variation>A</variation>
    <location>
        <position position="510"/>
    </location>
</feature>
<feature type="mutagenesis site" description="Completely inactive." evidence="6">
    <original>H</original>
    <variation>A</variation>
    <location>
        <position position="515"/>
    </location>
</feature>
<feature type="mutagenesis site" description="No effect." evidence="6">
    <original>D</original>
    <variation>A</variation>
    <location>
        <position position="517"/>
    </location>
</feature>
<feature type="mutagenesis site" description="No effect." evidence="6">
    <original>H</original>
    <variation>A</variation>
    <location>
        <position position="532"/>
    </location>
</feature>
<feature type="sequence conflict" description="In Ref. 4; BAG60363." evidence="20" ref="4">
    <original>Q</original>
    <variation>R</variation>
    <location>
        <position position="587"/>
    </location>
</feature>
<feature type="strand" evidence="28">
    <location>
        <begin position="11"/>
        <end position="14"/>
    </location>
</feature>
<feature type="turn" evidence="28">
    <location>
        <begin position="15"/>
        <end position="18"/>
    </location>
</feature>
<feature type="helix" evidence="28">
    <location>
        <begin position="20"/>
        <end position="31"/>
    </location>
</feature>
<feature type="strand" evidence="28">
    <location>
        <begin position="35"/>
        <end position="39"/>
    </location>
</feature>
<feature type="helix" evidence="28">
    <location>
        <begin position="53"/>
        <end position="64"/>
    </location>
</feature>
<feature type="strand" evidence="28">
    <location>
        <begin position="68"/>
        <end position="72"/>
    </location>
</feature>
<feature type="helix" evidence="28">
    <location>
        <begin position="76"/>
        <end position="78"/>
    </location>
</feature>
<feature type="helix" evidence="28">
    <location>
        <begin position="79"/>
        <end position="90"/>
    </location>
</feature>
<feature type="strand" evidence="28">
    <location>
        <begin position="95"/>
        <end position="98"/>
    </location>
</feature>
<feature type="helix" evidence="28">
    <location>
        <begin position="108"/>
        <end position="110"/>
    </location>
</feature>
<feature type="helix" evidence="28">
    <location>
        <begin position="113"/>
        <end position="141"/>
    </location>
</feature>
<feature type="strand" evidence="28">
    <location>
        <begin position="144"/>
        <end position="149"/>
    </location>
</feature>
<feature type="helix" evidence="28">
    <location>
        <begin position="152"/>
        <end position="156"/>
    </location>
</feature>
<feature type="helix" evidence="28">
    <location>
        <begin position="162"/>
        <end position="182"/>
    </location>
</feature>
<feature type="helix" evidence="28">
    <location>
        <begin position="183"/>
        <end position="185"/>
    </location>
</feature>
<feature type="strand" evidence="28">
    <location>
        <begin position="187"/>
        <end position="194"/>
    </location>
</feature>
<feature type="turn" evidence="28">
    <location>
        <begin position="199"/>
        <end position="204"/>
    </location>
</feature>
<feature type="helix" evidence="28">
    <location>
        <begin position="207"/>
        <end position="212"/>
    </location>
</feature>
<feature type="helix" evidence="28">
    <location>
        <begin position="215"/>
        <end position="217"/>
    </location>
</feature>
<feature type="helix" evidence="28">
    <location>
        <begin position="219"/>
        <end position="225"/>
    </location>
</feature>
<feature type="strand" evidence="28">
    <location>
        <begin position="236"/>
        <end position="240"/>
    </location>
</feature>
<feature type="strand" evidence="28">
    <location>
        <begin position="243"/>
        <end position="251"/>
    </location>
</feature>
<feature type="helix" evidence="28">
    <location>
        <begin position="266"/>
        <end position="271"/>
    </location>
</feature>
<feature type="helix" evidence="28">
    <location>
        <begin position="273"/>
        <end position="277"/>
    </location>
</feature>
<feature type="helix" evidence="28">
    <location>
        <begin position="288"/>
        <end position="303"/>
    </location>
</feature>
<feature type="strand" evidence="27">
    <location>
        <begin position="335"/>
        <end position="339"/>
    </location>
</feature>
<feature type="helix" evidence="27">
    <location>
        <begin position="341"/>
        <end position="350"/>
    </location>
</feature>
<feature type="helix" evidence="27">
    <location>
        <begin position="358"/>
        <end position="360"/>
    </location>
</feature>
<feature type="helix" evidence="27">
    <location>
        <begin position="361"/>
        <end position="364"/>
    </location>
</feature>
<feature type="helix" evidence="27">
    <location>
        <begin position="375"/>
        <end position="377"/>
    </location>
</feature>
<feature type="helix" evidence="27">
    <location>
        <begin position="378"/>
        <end position="381"/>
    </location>
</feature>
<feature type="helix" evidence="27">
    <location>
        <begin position="383"/>
        <end position="385"/>
    </location>
</feature>
<feature type="helix" evidence="27">
    <location>
        <begin position="401"/>
        <end position="403"/>
    </location>
</feature>
<feature type="strand" evidence="27">
    <location>
        <begin position="405"/>
        <end position="415"/>
    </location>
</feature>
<feature type="strand" evidence="27">
    <location>
        <begin position="419"/>
        <end position="432"/>
    </location>
</feature>
<feature type="strand" evidence="27">
    <location>
        <begin position="440"/>
        <end position="462"/>
    </location>
</feature>
<feature type="strand" evidence="27">
    <location>
        <begin position="490"/>
        <end position="496"/>
    </location>
</feature>
<feature type="helix" evidence="27">
    <location>
        <begin position="501"/>
        <end position="505"/>
    </location>
</feature>
<feature type="helix" evidence="27">
    <location>
        <begin position="506"/>
        <end position="508"/>
    </location>
</feature>
<feature type="helix" evidence="27">
    <location>
        <begin position="513"/>
        <end position="515"/>
    </location>
</feature>
<feature type="helix" evidence="27">
    <location>
        <begin position="518"/>
        <end position="522"/>
    </location>
</feature>
<feature type="turn" evidence="27">
    <location>
        <begin position="523"/>
        <end position="525"/>
    </location>
</feature>
<feature type="helix" evidence="27">
    <location>
        <begin position="533"/>
        <end position="548"/>
    </location>
</feature>
<feature type="helix" evidence="27">
    <location>
        <begin position="553"/>
        <end position="555"/>
    </location>
</feature>
<feature type="strand" evidence="27">
    <location>
        <begin position="556"/>
        <end position="563"/>
    </location>
</feature>
<feature type="strand" evidence="27">
    <location>
        <begin position="572"/>
        <end position="580"/>
    </location>
</feature>
<feature type="strand" evidence="27">
    <location>
        <begin position="583"/>
        <end position="590"/>
    </location>
</feature>
<feature type="turn" evidence="27">
    <location>
        <begin position="591"/>
        <end position="593"/>
    </location>
</feature>
<feature type="strand" evidence="27">
    <location>
        <begin position="596"/>
        <end position="605"/>
    </location>
</feature>
<feature type="helix" evidence="29">
    <location>
        <begin position="624"/>
        <end position="646"/>
    </location>
</feature>
<feature type="strand" evidence="29">
    <location>
        <begin position="648"/>
        <end position="670"/>
    </location>
</feature>
<feature type="strand" evidence="29">
    <location>
        <begin position="674"/>
        <end position="679"/>
    </location>
</feature>
<feature type="strand" evidence="29">
    <location>
        <begin position="685"/>
        <end position="691"/>
    </location>
</feature>
<feature type="helix" evidence="29">
    <location>
        <begin position="692"/>
        <end position="699"/>
    </location>
</feature>
<feature type="helix" evidence="29">
    <location>
        <begin position="705"/>
        <end position="710"/>
    </location>
</feature>
<feature type="strand" evidence="29">
    <location>
        <begin position="713"/>
        <end position="718"/>
    </location>
</feature>
<feature type="helix" evidence="29">
    <location>
        <begin position="720"/>
        <end position="723"/>
    </location>
</feature>
<feature type="helix" evidence="29">
    <location>
        <begin position="729"/>
        <end position="732"/>
    </location>
</feature>
<feature type="helix" evidence="29">
    <location>
        <begin position="733"/>
        <end position="735"/>
    </location>
</feature>
<accession>P51659</accession>
<accession>B4DNV1</accession>
<accession>B4DVS5</accession>
<accession>E9PB82</accession>
<accession>F5HE57</accession>
<sequence>MGSPLRFDGRVVLVTGAGAGLGRAYALAFAERGALVVVNDLGGDFKGVGKGSLAADKVVEEIRRRGGKAVANYDSVEEGEKVVKTALDAFGRIDVVVNNAGILRDRSFARISDEDWDIIHRVHLRGSFQVTRAAWEHMKKQKYGRIIMTSSASGIYGNFGQANYSAAKLGLLGLANSLAIEGRKSNIHCNTIAPNAGSRMTQTVMPEDLVEALKPEYVAPLVLWLCHESCEENGGLFEVGAGWIGKLRWERTLGAIVRQKNHPMTPEAVKANWKKICDFENASKPQSIQESTGSIIEVLSKIDSEGGVSANHTSRATSTATSGFAGAIGQKLPPFSYAYTELEAIMYALGVGASIKDPKDLKFIYEGSSDFSCLPTFGVIIGQKSMMGGGLAEIPGLSINFAKVLHGEQYLELYKPLPRAGKLKCEAVVADVLDKGSGVVIIMDVYSYSEKELICHNQFSLFLVGSGGFGGKRTSDKVKVAVAIPNRPPDAVLTDTTSLNQAALYRLSGDWNPLHIDPNFASLAGFDKPILHGLCTFGFSARRVLQQFADNDVSRFKAIKARFAKPVYPGQTLQTEMWKEGNRIHFQTKVQETGDIVISNAYVDLAPTSGTSAKTPSEGGKLQSTFVFEEIGRRLKDIGPEVVKKVNAVFEWHITKGGNIGAKWTIDLKSGSGKVYQGPAKGAADTTIILSDEDFMEVVLGKLDPQKAFFSGRLKARGNIMLSQKLQMILKDYAKL</sequence>
<evidence type="ECO:0000250" key="1"/>
<evidence type="ECO:0000250" key="2">
    <source>
        <dbReference type="UniProtKB" id="P51660"/>
    </source>
</evidence>
<evidence type="ECO:0000255" key="3"/>
<evidence type="ECO:0000255" key="4">
    <source>
        <dbReference type="PROSITE-ProRule" id="PRU10001"/>
    </source>
</evidence>
<evidence type="ECO:0000269" key="5">
    <source>
    </source>
</evidence>
<evidence type="ECO:0000269" key="6">
    <source>
    </source>
</evidence>
<evidence type="ECO:0000269" key="7">
    <source>
    </source>
</evidence>
<evidence type="ECO:0000269" key="8">
    <source>
    </source>
</evidence>
<evidence type="ECO:0000269" key="9">
    <source>
    </source>
</evidence>
<evidence type="ECO:0000269" key="10">
    <source>
    </source>
</evidence>
<evidence type="ECO:0000269" key="11">
    <source>
    </source>
</evidence>
<evidence type="ECO:0000269" key="12">
    <source>
    </source>
</evidence>
<evidence type="ECO:0000269" key="13">
    <source>
    </source>
</evidence>
<evidence type="ECO:0000269" key="14">
    <source>
    </source>
</evidence>
<evidence type="ECO:0000269" key="15">
    <source>
    </source>
</evidence>
<evidence type="ECO:0000269" key="16">
    <source>
    </source>
</evidence>
<evidence type="ECO:0000303" key="17">
    <source>
    </source>
</evidence>
<evidence type="ECO:0000303" key="18">
    <source>
    </source>
</evidence>
<evidence type="ECO:0000303" key="19">
    <source>
    </source>
</evidence>
<evidence type="ECO:0000305" key="20"/>
<evidence type="ECO:0000305" key="21">
    <source>
    </source>
</evidence>
<evidence type="ECO:0000312" key="22">
    <source>
        <dbReference type="HGNC" id="HGNC:5213"/>
    </source>
</evidence>
<evidence type="ECO:0007744" key="23">
    <source>
    </source>
</evidence>
<evidence type="ECO:0007744" key="24">
    <source>
    </source>
</evidence>
<evidence type="ECO:0007744" key="25">
    <source>
    </source>
</evidence>
<evidence type="ECO:0007744" key="26">
    <source>
    </source>
</evidence>
<evidence type="ECO:0007829" key="27">
    <source>
        <dbReference type="PDB" id="1S9C"/>
    </source>
</evidence>
<evidence type="ECO:0007829" key="28">
    <source>
        <dbReference type="PDB" id="1ZBQ"/>
    </source>
</evidence>
<evidence type="ECO:0007829" key="29">
    <source>
        <dbReference type="PDB" id="8AF3"/>
    </source>
</evidence>
<organism>
    <name type="scientific">Homo sapiens</name>
    <name type="common">Human</name>
    <dbReference type="NCBI Taxonomy" id="9606"/>
    <lineage>
        <taxon>Eukaryota</taxon>
        <taxon>Metazoa</taxon>
        <taxon>Chordata</taxon>
        <taxon>Craniata</taxon>
        <taxon>Vertebrata</taxon>
        <taxon>Euteleostomi</taxon>
        <taxon>Mammalia</taxon>
        <taxon>Eutheria</taxon>
        <taxon>Euarchontoglires</taxon>
        <taxon>Primates</taxon>
        <taxon>Haplorrhini</taxon>
        <taxon>Catarrhini</taxon>
        <taxon>Hominidae</taxon>
        <taxon>Homo</taxon>
    </lineage>
</organism>
<name>DHB4_HUMAN</name>
<reference key="1">
    <citation type="journal article" date="1995" name="Biochem. J.">
        <title>Molecular cloning of a novel widely expressed human 80 kDa 17 beta-hydroxysteroid dehydrogenase IV.</title>
        <authorList>
            <person name="Adamski J."/>
            <person name="Normand T."/>
            <person name="Leenders F."/>
            <person name="Monte D."/>
            <person name="Begue A."/>
            <person name="Stehelin D."/>
            <person name="Jungblut P.W."/>
            <person name="de Launoit Y."/>
        </authorList>
    </citation>
    <scope>NUCLEOTIDE SEQUENCE [MRNA] (ISOFORM 1)</scope>
    <source>
        <tissue>Liver</tissue>
    </source>
</reference>
<reference key="2">
    <citation type="journal article" date="1997" name="J. Biochem.">
        <title>Structure of D-3-hydroxyacyl-CoA dehydratase/D-3-hydroxyacyl-CoA dehydrogenase bifunctional protein.</title>
        <authorList>
            <person name="Jiang L.L."/>
            <person name="Miyazawa S."/>
            <person name="Souri M."/>
            <person name="Hashimoto T."/>
        </authorList>
    </citation>
    <scope>NUCLEOTIDE SEQUENCE [MRNA] (ISOFORM 1)</scope>
    <scope>PROTEIN SEQUENCE OF 69-77; 81-90; 261-270; 291-310; 312-339; 413-426; 451-459; 478-488 AND 590-631</scope>
    <scope>FUNCTION</scope>
    <scope>CATALYTIC ACTIVITY</scope>
    <scope>BIOPHYSICOCHEMICAL PROPERTIES</scope>
</reference>
<reference key="3">
    <citation type="journal article" date="1998" name="Mamm. Genome">
        <title>Structure of the gene for the human 17beta-hydroxysteroid dehydrogenase type IV.</title>
        <authorList>
            <person name="Leenders F."/>
            <person name="Dolez V."/>
            <person name="Begue A."/>
            <person name="Moller G."/>
            <person name="Gloeckner J.C."/>
            <person name="de Launoit Y."/>
            <person name="Adamski J."/>
        </authorList>
    </citation>
    <scope>NUCLEOTIDE SEQUENCE [GENOMIC DNA]</scope>
</reference>
<reference key="4">
    <citation type="journal article" date="2004" name="Nat. Genet.">
        <title>Complete sequencing and characterization of 21,243 full-length human cDNAs.</title>
        <authorList>
            <person name="Ota T."/>
            <person name="Suzuki Y."/>
            <person name="Nishikawa T."/>
            <person name="Otsuki T."/>
            <person name="Sugiyama T."/>
            <person name="Irie R."/>
            <person name="Wakamatsu A."/>
            <person name="Hayashi K."/>
            <person name="Sato H."/>
            <person name="Nagai K."/>
            <person name="Kimura K."/>
            <person name="Makita H."/>
            <person name="Sekine M."/>
            <person name="Obayashi M."/>
            <person name="Nishi T."/>
            <person name="Shibahara T."/>
            <person name="Tanaka T."/>
            <person name="Ishii S."/>
            <person name="Yamamoto J."/>
            <person name="Saito K."/>
            <person name="Kawai Y."/>
            <person name="Isono Y."/>
            <person name="Nakamura Y."/>
            <person name="Nagahari K."/>
            <person name="Murakami K."/>
            <person name="Yasuda T."/>
            <person name="Iwayanagi T."/>
            <person name="Wagatsuma M."/>
            <person name="Shiratori A."/>
            <person name="Sudo H."/>
            <person name="Hosoiri T."/>
            <person name="Kaku Y."/>
            <person name="Kodaira H."/>
            <person name="Kondo H."/>
            <person name="Sugawara M."/>
            <person name="Takahashi M."/>
            <person name="Kanda K."/>
            <person name="Yokoi T."/>
            <person name="Furuya T."/>
            <person name="Kikkawa E."/>
            <person name="Omura Y."/>
            <person name="Abe K."/>
            <person name="Kamihara K."/>
            <person name="Katsuta N."/>
            <person name="Sato K."/>
            <person name="Tanikawa M."/>
            <person name="Yamazaki M."/>
            <person name="Ninomiya K."/>
            <person name="Ishibashi T."/>
            <person name="Yamashita H."/>
            <person name="Murakawa K."/>
            <person name="Fujimori K."/>
            <person name="Tanai H."/>
            <person name="Kimata M."/>
            <person name="Watanabe M."/>
            <person name="Hiraoka S."/>
            <person name="Chiba Y."/>
            <person name="Ishida S."/>
            <person name="Ono Y."/>
            <person name="Takiguchi S."/>
            <person name="Watanabe S."/>
            <person name="Yosida M."/>
            <person name="Hotuta T."/>
            <person name="Kusano J."/>
            <person name="Kanehori K."/>
            <person name="Takahashi-Fujii A."/>
            <person name="Hara H."/>
            <person name="Tanase T.-O."/>
            <person name="Nomura Y."/>
            <person name="Togiya S."/>
            <person name="Komai F."/>
            <person name="Hara R."/>
            <person name="Takeuchi K."/>
            <person name="Arita M."/>
            <person name="Imose N."/>
            <person name="Musashino K."/>
            <person name="Yuuki H."/>
            <person name="Oshima A."/>
            <person name="Sasaki N."/>
            <person name="Aotsuka S."/>
            <person name="Yoshikawa Y."/>
            <person name="Matsunawa H."/>
            <person name="Ichihara T."/>
            <person name="Shiohata N."/>
            <person name="Sano S."/>
            <person name="Moriya S."/>
            <person name="Momiyama H."/>
            <person name="Satoh N."/>
            <person name="Takami S."/>
            <person name="Terashima Y."/>
            <person name="Suzuki O."/>
            <person name="Nakagawa S."/>
            <person name="Senoh A."/>
            <person name="Mizoguchi H."/>
            <person name="Goto Y."/>
            <person name="Shimizu F."/>
            <person name="Wakebe H."/>
            <person name="Hishigaki H."/>
            <person name="Watanabe T."/>
            <person name="Sugiyama A."/>
            <person name="Takemoto M."/>
            <person name="Kawakami B."/>
            <person name="Yamazaki M."/>
            <person name="Watanabe K."/>
            <person name="Kumagai A."/>
            <person name="Itakura S."/>
            <person name="Fukuzumi Y."/>
            <person name="Fujimori Y."/>
            <person name="Komiyama M."/>
            <person name="Tashiro H."/>
            <person name="Tanigami A."/>
            <person name="Fujiwara T."/>
            <person name="Ono T."/>
            <person name="Yamada K."/>
            <person name="Fujii Y."/>
            <person name="Ozaki K."/>
            <person name="Hirao M."/>
            <person name="Ohmori Y."/>
            <person name="Kawabata A."/>
            <person name="Hikiji T."/>
            <person name="Kobatake N."/>
            <person name="Inagaki H."/>
            <person name="Ikema Y."/>
            <person name="Okamoto S."/>
            <person name="Okitani R."/>
            <person name="Kawakami T."/>
            <person name="Noguchi S."/>
            <person name="Itoh T."/>
            <person name="Shigeta K."/>
            <person name="Senba T."/>
            <person name="Matsumura K."/>
            <person name="Nakajima Y."/>
            <person name="Mizuno T."/>
            <person name="Morinaga M."/>
            <person name="Sasaki M."/>
            <person name="Togashi T."/>
            <person name="Oyama M."/>
            <person name="Hata H."/>
            <person name="Watanabe M."/>
            <person name="Komatsu T."/>
            <person name="Mizushima-Sugano J."/>
            <person name="Satoh T."/>
            <person name="Shirai Y."/>
            <person name="Takahashi Y."/>
            <person name="Nakagawa K."/>
            <person name="Okumura K."/>
            <person name="Nagase T."/>
            <person name="Nomura N."/>
            <person name="Kikuchi H."/>
            <person name="Masuho Y."/>
            <person name="Yamashita R."/>
            <person name="Nakai K."/>
            <person name="Yada T."/>
            <person name="Nakamura Y."/>
            <person name="Ohara O."/>
            <person name="Isogai T."/>
            <person name="Sugano S."/>
        </authorList>
    </citation>
    <scope>NUCLEOTIDE SEQUENCE [LARGE SCALE MRNA] (ISOFORMS 2 AND 3)</scope>
    <scope>VARIANTS HIS-106 AND VAL-559</scope>
    <source>
        <tissue>Lung</tissue>
        <tissue>Spleen</tissue>
    </source>
</reference>
<reference key="5">
    <citation type="journal article" date="2004" name="Nature">
        <title>The DNA sequence and comparative analysis of human chromosome 5.</title>
        <authorList>
            <person name="Schmutz J."/>
            <person name="Martin J."/>
            <person name="Terry A."/>
            <person name="Couronne O."/>
            <person name="Grimwood J."/>
            <person name="Lowry S."/>
            <person name="Gordon L.A."/>
            <person name="Scott D."/>
            <person name="Xie G."/>
            <person name="Huang W."/>
            <person name="Hellsten U."/>
            <person name="Tran-Gyamfi M."/>
            <person name="She X."/>
            <person name="Prabhakar S."/>
            <person name="Aerts A."/>
            <person name="Altherr M."/>
            <person name="Bajorek E."/>
            <person name="Black S."/>
            <person name="Branscomb E."/>
            <person name="Caoile C."/>
            <person name="Challacombe J.F."/>
            <person name="Chan Y.M."/>
            <person name="Denys M."/>
            <person name="Detter J.C."/>
            <person name="Escobar J."/>
            <person name="Flowers D."/>
            <person name="Fotopulos D."/>
            <person name="Glavina T."/>
            <person name="Gomez M."/>
            <person name="Gonzales E."/>
            <person name="Goodstein D."/>
            <person name="Grigoriev I."/>
            <person name="Groza M."/>
            <person name="Hammon N."/>
            <person name="Hawkins T."/>
            <person name="Haydu L."/>
            <person name="Israni S."/>
            <person name="Jett J."/>
            <person name="Kadner K."/>
            <person name="Kimball H."/>
            <person name="Kobayashi A."/>
            <person name="Lopez F."/>
            <person name="Lou Y."/>
            <person name="Martinez D."/>
            <person name="Medina C."/>
            <person name="Morgan J."/>
            <person name="Nandkeshwar R."/>
            <person name="Noonan J.P."/>
            <person name="Pitluck S."/>
            <person name="Pollard M."/>
            <person name="Predki P."/>
            <person name="Priest J."/>
            <person name="Ramirez L."/>
            <person name="Retterer J."/>
            <person name="Rodriguez A."/>
            <person name="Rogers S."/>
            <person name="Salamov A."/>
            <person name="Salazar A."/>
            <person name="Thayer N."/>
            <person name="Tice H."/>
            <person name="Tsai M."/>
            <person name="Ustaszewska A."/>
            <person name="Vo N."/>
            <person name="Wheeler J."/>
            <person name="Wu K."/>
            <person name="Yang J."/>
            <person name="Dickson M."/>
            <person name="Cheng J.-F."/>
            <person name="Eichler E.E."/>
            <person name="Olsen A."/>
            <person name="Pennacchio L.A."/>
            <person name="Rokhsar D.S."/>
            <person name="Richardson P."/>
            <person name="Lucas S.M."/>
            <person name="Myers R.M."/>
            <person name="Rubin E.M."/>
        </authorList>
    </citation>
    <scope>NUCLEOTIDE SEQUENCE [LARGE SCALE GENOMIC DNA]</scope>
</reference>
<reference key="6">
    <citation type="journal article" date="2004" name="Genome Res.">
        <title>The status, quality, and expansion of the NIH full-length cDNA project: the Mammalian Gene Collection (MGC).</title>
        <authorList>
            <consortium name="The MGC Project Team"/>
        </authorList>
    </citation>
    <scope>NUCLEOTIDE SEQUENCE [LARGE SCALE MRNA] (ISOFORM 1)</scope>
    <source>
        <tissue>Brain</tissue>
    </source>
</reference>
<reference key="7">
    <citation type="journal article" date="1996" name="J. Biochem.">
        <title>Purification and properties of human D-3-hydroxyacyl-CoA dehydratase: medium-chain enoyl-CoA hydratase is D-3-hydroxyacyl-CoA dehydratase.</title>
        <authorList>
            <person name="Jiang L.L."/>
            <person name="Kobayashi A."/>
            <person name="Matsuura H."/>
            <person name="Fukushima H."/>
            <person name="Hashimoto T."/>
        </authorList>
    </citation>
    <scope>FUNCTION</scope>
    <scope>SUBUNIT</scope>
</reference>
<reference key="8">
    <citation type="journal article" date="2000" name="J. Biol. Chem.">
        <title>Human peroxisomal multifunctional enzyme type 2. Site-directed mutagenesis studies show the importance of two protic residues for 2-enoyl-CoA hydratase 2 activity.</title>
        <authorList>
            <person name="Qin Y.M."/>
            <person name="Haapalainen A.M."/>
            <person name="Kilpelainen S.H."/>
            <person name="Marttila M.S."/>
            <person name="Koski M.K."/>
            <person name="Glumoff T."/>
            <person name="Novikov D.K."/>
            <person name="Hiltunen J.K."/>
        </authorList>
    </citation>
    <scope>MUTAGENESIS OF TYR-347; GLU-366; ASP-370; HIS-406; GLU-408; TYR-410; ASP-490; TYR-505; ASP-510; HIS-515; ASP-517 AND HIS-532</scope>
    <scope>CHARACTERIZATION OF VARIANT DBPD SER-16</scope>
    <scope>CATALYTIC ACTIVITY</scope>
</reference>
<reference key="9">
    <citation type="journal article" date="2000" name="J. Lipid Res.">
        <title>Peroxisomal fatty acid oxidation disorders and 58 kDa sterol carrier protein X (SCPx). Activity measurements in liver and fibroblasts using a newly developed method.</title>
        <authorList>
            <person name="Ferdinandusse S."/>
            <person name="Denis S."/>
            <person name="van Berkel E."/>
            <person name="Dacremont G."/>
            <person name="Wanders R.J."/>
        </authorList>
    </citation>
    <scope>CATALYTIC ACTIVITY</scope>
</reference>
<reference key="10">
    <citation type="journal article" date="2004" name="J. Lipid Res.">
        <title>Identification of the peroxisomal beta-oxidation enzymes involved in the degradation of long-chain dicarboxylic acids.</title>
        <authorList>
            <person name="Ferdinandusse S."/>
            <person name="Denis S."/>
            <person name="Van Roermund C.W."/>
            <person name="Wanders R.J."/>
            <person name="Dacremont G."/>
        </authorList>
    </citation>
    <scope>FUNCTION</scope>
    <scope>CATALYTIC ACTIVITY</scope>
    <scope>BIOPHYSICOCHEMICAL PROPERTIES</scope>
</reference>
<reference key="11">
    <citation type="journal article" date="2009" name="Mol. Cell. Proteomics">
        <title>Large-scale proteomics analysis of the human kinome.</title>
        <authorList>
            <person name="Oppermann F.S."/>
            <person name="Gnad F."/>
            <person name="Olsen J.V."/>
            <person name="Hornberger R."/>
            <person name="Greff Z."/>
            <person name="Keri G."/>
            <person name="Mann M."/>
            <person name="Daub H."/>
        </authorList>
    </citation>
    <scope>PHOSPHORYLATION [LARGE SCALE ANALYSIS] AT SER-304 AND SER-309</scope>
    <scope>IDENTIFICATION BY MASS SPECTROMETRY [LARGE SCALE ANALYSIS]</scope>
</reference>
<reference key="12">
    <citation type="journal article" date="2009" name="Sci. Signal.">
        <title>Quantitative phosphoproteomic analysis of T cell receptor signaling reveals system-wide modulation of protein-protein interactions.</title>
        <authorList>
            <person name="Mayya V."/>
            <person name="Lundgren D.H."/>
            <person name="Hwang S.-I."/>
            <person name="Rezaul K."/>
            <person name="Wu L."/>
            <person name="Eng J.K."/>
            <person name="Rodionov V."/>
            <person name="Han D.K."/>
        </authorList>
    </citation>
    <scope>IDENTIFICATION BY MASS SPECTROMETRY [LARGE SCALE ANALYSIS]</scope>
    <source>
        <tissue>Leukemic T-cell</tissue>
    </source>
</reference>
<reference key="13">
    <citation type="journal article" date="2009" name="Science">
        <title>Lysine acetylation targets protein complexes and co-regulates major cellular functions.</title>
        <authorList>
            <person name="Choudhary C."/>
            <person name="Kumar C."/>
            <person name="Gnad F."/>
            <person name="Nielsen M.L."/>
            <person name="Rehman M."/>
            <person name="Walther T.C."/>
            <person name="Olsen J.V."/>
            <person name="Mann M."/>
        </authorList>
    </citation>
    <scope>ACETYLATION [LARGE SCALE ANALYSIS] AT LYS-565; LYS-669 AND LYS-707</scope>
    <scope>IDENTIFICATION BY MASS SPECTROMETRY [LARGE SCALE ANALYSIS]</scope>
</reference>
<reference key="14">
    <citation type="journal article" date="2011" name="BMC Syst. Biol.">
        <title>Initial characterization of the human central proteome.</title>
        <authorList>
            <person name="Burkard T.R."/>
            <person name="Planyavsky M."/>
            <person name="Kaupe I."/>
            <person name="Breitwieser F.P."/>
            <person name="Buerckstuemmer T."/>
            <person name="Bennett K.L."/>
            <person name="Superti-Furga G."/>
            <person name="Colinge J."/>
        </authorList>
    </citation>
    <scope>IDENTIFICATION BY MASS SPECTROMETRY [LARGE SCALE ANALYSIS]</scope>
</reference>
<reference key="15">
    <citation type="journal article" date="2013" name="J. Proteome Res.">
        <title>Toward a comprehensive characterization of a human cancer cell phosphoproteome.</title>
        <authorList>
            <person name="Zhou H."/>
            <person name="Di Palma S."/>
            <person name="Preisinger C."/>
            <person name="Peng M."/>
            <person name="Polat A.N."/>
            <person name="Heck A.J."/>
            <person name="Mohammed S."/>
        </authorList>
    </citation>
    <scope>PHOSPHORYLATION [LARGE SCALE ANALYSIS] AT THR-265</scope>
    <scope>IDENTIFICATION BY MASS SPECTROMETRY [LARGE SCALE ANALYSIS]</scope>
    <source>
        <tissue>Cervix carcinoma</tissue>
        <tissue>Erythroleukemia</tissue>
    </source>
</reference>
<reference key="16">
    <citation type="journal article" date="2014" name="J. Proteomics">
        <title>An enzyme assisted RP-RPLC approach for in-depth analysis of human liver phosphoproteome.</title>
        <authorList>
            <person name="Bian Y."/>
            <person name="Song C."/>
            <person name="Cheng K."/>
            <person name="Dong M."/>
            <person name="Wang F."/>
            <person name="Huang J."/>
            <person name="Sun D."/>
            <person name="Wang L."/>
            <person name="Ye M."/>
            <person name="Zou H."/>
        </authorList>
    </citation>
    <scope>PHOSPHORYLATION [LARGE SCALE ANALYSIS] AT SER-52</scope>
    <scope>IDENTIFICATION BY MASS SPECTROMETRY [LARGE SCALE ANALYSIS]</scope>
    <source>
        <tissue>Liver</tissue>
    </source>
</reference>
<reference key="17">
    <citation type="journal article" date="2015" name="Proteomics">
        <title>N-terminome analysis of the human mitochondrial proteome.</title>
        <authorList>
            <person name="Vaca Jacome A.S."/>
            <person name="Rabilloud T."/>
            <person name="Schaeffer-Reiss C."/>
            <person name="Rompais M."/>
            <person name="Ayoub D."/>
            <person name="Lane L."/>
            <person name="Bairoch A."/>
            <person name="Van Dorsselaer A."/>
            <person name="Carapito C."/>
        </authorList>
    </citation>
    <scope>IDENTIFICATION BY MASS SPECTROMETRY [LARGE SCALE ANALYSIS]</scope>
</reference>
<reference key="18">
    <citation type="journal article" date="2001" name="J. Mol. Biol.">
        <title>Crystal structure of the liganded SCP-2-like domain of human peroxisomal multifunctional enzyme type 2 at 1.75 A resolution.</title>
        <authorList>
            <person name="Haapalainen A.M."/>
            <person name="van Aalten D.M."/>
            <person name="Merilaeinen G."/>
            <person name="Jalonen J.E."/>
            <person name="Pirilae P."/>
            <person name="Wierenga R.K."/>
            <person name="Hiltunen J.K."/>
            <person name="Glumoff T."/>
        </authorList>
    </citation>
    <scope>X-RAY CRYSTALLOGRAPHY (1.75 ANGSTROMS) OF 618-736 IN COMPLEX WITH LIGAND</scope>
</reference>
<reference key="19">
    <citation type="journal article" date="2005" name="J. Mol. Biol.">
        <title>Crystal structure of 2-enoyl-CoA hydratase 2 from human peroxisomal multifunctional enzyme type 2.</title>
        <authorList>
            <person name="Koski K.M."/>
            <person name="Haapalainen A.M."/>
            <person name="Hiltunen J.K."/>
            <person name="Glumoff T."/>
        </authorList>
    </citation>
    <scope>X-RAY CRYSTALLOGRAPHY (3.0 ANGSTROMS) OF 320-614</scope>
</reference>
<reference key="20">
    <citation type="journal article" date="1998" name="Proc. Natl. Acad. Sci. U.S.A.">
        <title>Peroxisomal D-hydroxyacyl-CoA dehydrogenase deficiency: resolution of the enzyme defect and its molecular basis in bifunctional protein deficiency.</title>
        <authorList>
            <person name="van Grunsven E.G."/>
            <person name="van Berkel E."/>
            <person name="Ijlst L."/>
            <person name="Vreken P."/>
            <person name="de Klerk J.B.C."/>
            <person name="Adamski J."/>
            <person name="Lemonde H."/>
            <person name="Clayton P.T."/>
            <person name="Cuebas D.A."/>
            <person name="Wanders R.J.A."/>
        </authorList>
    </citation>
    <scope>VARIANT DBPD SER-16</scope>
    <scope>CATALYTIC ACTIVITY</scope>
    <scope>FUNCTION</scope>
</reference>
<reference key="21">
    <citation type="journal article" date="1999" name="Hum. Mol. Genet.">
        <title>Enoyl-CoA hydratase deficiency: identification of a new type of D-bifunctional protein deficiency.</title>
        <authorList>
            <person name="van Grunsven E.G."/>
            <person name="Mooijer P.A."/>
            <person name="Aubourg P."/>
            <person name="Wanders R.J."/>
        </authorList>
    </citation>
    <scope>VARIANT DBPD TYR-457</scope>
    <scope>VARIANT ARG-511</scope>
</reference>
<reference key="22">
    <citation type="journal article" date="2001" name="J. Pediatr.">
        <title>D-bifunctional protein deficiency with fetal ascites, polyhydramnios, and contractures of hands and toes.</title>
        <authorList>
            <person name="Nakano K."/>
            <person name="Zhang Z."/>
            <person name="Shimozawa N."/>
            <person name="Kondo N."/>
            <person name="Ishii N."/>
            <person name="Funatsuka M."/>
            <person name="Shirakawa S."/>
            <person name="Itoh M."/>
            <person name="Takashima S."/>
            <person name="Une M."/>
            <person name="Kana-aki R.R."/>
            <person name="Mukai K."/>
            <person name="Osawa M."/>
            <person name="Suzuki Y."/>
        </authorList>
    </citation>
    <scope>VARIANT DBPD PRO-106</scope>
</reference>
<reference key="23">
    <citation type="journal article" date="2010" name="Am. J. Hum. Genet.">
        <title>Mutations in the DBP-deficiency protein HSD17B4 cause ovarian dysgenesis, hearing loss, and ataxia of Perrault Syndrome.</title>
        <authorList>
            <person name="Pierce S.B."/>
            <person name="Walsh T."/>
            <person name="Chisholm K.M."/>
            <person name="Lee M.K."/>
            <person name="Thornton A.M."/>
            <person name="Fiumara A."/>
            <person name="Opitz J.M."/>
            <person name="Levy-Lahad E."/>
            <person name="Klevit R.E."/>
            <person name="King M.C."/>
        </authorList>
    </citation>
    <scope>VARIANT PRLTS1 CYS-217</scope>
</reference>
<reference key="24">
    <citation type="journal article" date="2015" name="J. Neurol. Sci.">
        <title>Exome analysis identified a novel missense mutation in the CLPP gene in a consanguineous Saudi family expanding the clinical spectrum of Perrault Syndrome type-3.</title>
        <authorList>
            <person name="Ahmed S."/>
            <person name="Jelani M."/>
            <person name="Alrayes N."/>
            <person name="Mohamoud H.S."/>
            <person name="Almramhi M.M."/>
            <person name="Anshasi W."/>
            <person name="Ahmed N.A."/>
            <person name="Wang J."/>
            <person name="Nasir J."/>
            <person name="Al-Aama J.Y."/>
        </authorList>
    </citation>
    <scope>VARIANTS HIS-106 AND VAL-559</scope>
</reference>
<protein>
    <recommendedName>
        <fullName evidence="20">Peroxisomal multifunctional enzyme type 2</fullName>
        <shortName evidence="17">MFE-2</shortName>
    </recommendedName>
    <alternativeName>
        <fullName>17-beta-hydroxysteroid dehydrogenase 4</fullName>
        <shortName>17-beta-HSD 4</shortName>
    </alternativeName>
    <alternativeName>
        <fullName evidence="19">D-bifunctional protein</fullName>
        <shortName evidence="19">DBP</shortName>
    </alternativeName>
    <alternativeName>
        <fullName>Multifunctional protein 2</fullName>
        <shortName>MFP-2</shortName>
    </alternativeName>
    <alternativeName>
        <fullName>Short chain dehydrogenase/reductase family 8C member 1</fullName>
    </alternativeName>
    <component>
        <recommendedName>
            <fullName>(3R)-hydroxyacyl-CoA dehydrogenase</fullName>
            <ecNumber evidence="15">1.1.1.n12</ecNumber>
        </recommendedName>
    </component>
    <component>
        <recommendedName>
            <fullName>Enoyl-CoA hydratase 2</fullName>
            <ecNumber evidence="7 16">4.2.1.107</ecNumber>
            <ecNumber evidence="15">4.2.1.119</ecNumber>
        </recommendedName>
        <alternativeName>
            <fullName>3-alpha,7-alpha,12-alpha-trihydroxy-5-beta-cholest-24-enoyl-CoA hydratase</fullName>
        </alternativeName>
    </component>
</protein>
<comment type="function">
    <text evidence="6 11 14 15">Bifunctional enzyme acting on the peroxisomal fatty acid beta-oxidation pathway. Catalyzes two of the four reactions in fatty acid degradation: hydration of 2-enoyl-CoA (trans-2-enoyl-CoA) to produce (3R)-3-hydroxyacyl-CoA, and dehydrogenation of (3R)-3-hydroxyacyl-CoA to produce 3-ketoacyl-CoA (3-oxoacyl-CoA), which is further metabolized by SCPx. Can use straight-chain and branched-chain fatty acids, as well as bile acid intermediates as substrates.</text>
</comment>
<comment type="catalytic activity">
    <reaction evidence="15">
        <text>a (3R)-3-hydroxyacyl-CoA + NAD(+) = a 3-oxoacyl-CoA + NADH + H(+)</text>
        <dbReference type="Rhea" id="RHEA:32711"/>
        <dbReference type="ChEBI" id="CHEBI:15378"/>
        <dbReference type="ChEBI" id="CHEBI:57319"/>
        <dbReference type="ChEBI" id="CHEBI:57540"/>
        <dbReference type="ChEBI" id="CHEBI:57945"/>
        <dbReference type="ChEBI" id="CHEBI:90726"/>
        <dbReference type="EC" id="1.1.1.n12"/>
    </reaction>
    <physiologicalReaction direction="left-to-right" evidence="21">
        <dbReference type="Rhea" id="RHEA:32712"/>
    </physiologicalReaction>
</comment>
<comment type="catalytic activity">
    <reaction evidence="15">
        <text>a (3R)-3-hydroxyacyl-CoA = a (2E)-enoyl-CoA + H2O</text>
        <dbReference type="Rhea" id="RHEA:26526"/>
        <dbReference type="ChEBI" id="CHEBI:15377"/>
        <dbReference type="ChEBI" id="CHEBI:57319"/>
        <dbReference type="ChEBI" id="CHEBI:58856"/>
        <dbReference type="EC" id="4.2.1.119"/>
    </reaction>
    <physiologicalReaction direction="right-to-left" evidence="21">
        <dbReference type="Rhea" id="RHEA:26528"/>
    </physiologicalReaction>
</comment>
<comment type="catalytic activity">
    <reaction evidence="7 16">
        <text>(24R,25R)-3alpha,7alpha,12alpha,24-tetrahydroxy-5beta-cholestan-26-oyl-CoA = (24E)-3alpha,7alpha,12alpha-trihydroxy-5beta-cholest-24-en-26-oyl-CoA + H2O</text>
        <dbReference type="Rhea" id="RHEA:18933"/>
        <dbReference type="ChEBI" id="CHEBI:15377"/>
        <dbReference type="ChEBI" id="CHEBI:59807"/>
        <dbReference type="ChEBI" id="CHEBI:59879"/>
        <dbReference type="EC" id="4.2.1.107"/>
    </reaction>
    <physiologicalReaction direction="right-to-left" evidence="7 16">
        <dbReference type="Rhea" id="RHEA:18935"/>
    </physiologicalReaction>
</comment>
<comment type="catalytic activity">
    <reaction evidence="15">
        <text>(2E)-octenoyl-CoA + H2O = (3R)-hydroxyoctanoyl-CoA</text>
        <dbReference type="Rhea" id="RHEA:40187"/>
        <dbReference type="ChEBI" id="CHEBI:15377"/>
        <dbReference type="ChEBI" id="CHEBI:62242"/>
        <dbReference type="ChEBI" id="CHEBI:74279"/>
    </reaction>
    <physiologicalReaction direction="left-to-right" evidence="15">
        <dbReference type="Rhea" id="RHEA:40188"/>
    </physiologicalReaction>
</comment>
<comment type="catalytic activity">
    <reaction evidence="15">
        <text>(3R)-hydroxyoctanoyl-CoA + NAD(+) = 3-oxooctanoyl-CoA + NADH + H(+)</text>
        <dbReference type="Rhea" id="RHEA:40191"/>
        <dbReference type="ChEBI" id="CHEBI:15378"/>
        <dbReference type="ChEBI" id="CHEBI:57540"/>
        <dbReference type="ChEBI" id="CHEBI:57945"/>
        <dbReference type="ChEBI" id="CHEBI:62619"/>
        <dbReference type="ChEBI" id="CHEBI:74279"/>
    </reaction>
    <physiologicalReaction direction="left-to-right" evidence="15">
        <dbReference type="Rhea" id="RHEA:40192"/>
    </physiologicalReaction>
</comment>
<comment type="catalytic activity">
    <reaction evidence="11">
        <text>(3R)-hydroxyhexadecanoyl-CoA + NAD(+) = 3-oxohexadecanoyl-CoA + NADH + H(+)</text>
        <dbReference type="Rhea" id="RHEA:40243"/>
        <dbReference type="ChEBI" id="CHEBI:15378"/>
        <dbReference type="ChEBI" id="CHEBI:57349"/>
        <dbReference type="ChEBI" id="CHEBI:57540"/>
        <dbReference type="ChEBI" id="CHEBI:57945"/>
        <dbReference type="ChEBI" id="CHEBI:74278"/>
    </reaction>
    <physiologicalReaction direction="left-to-right" evidence="11">
        <dbReference type="Rhea" id="RHEA:40244"/>
    </physiologicalReaction>
</comment>
<comment type="catalytic activity">
    <reaction evidence="11">
        <text>(2E)-hexadecenedioyl-CoA + H2O = (3R)-hydroxyhexadecanedioyl-CoA</text>
        <dbReference type="Rhea" id="RHEA:40255"/>
        <dbReference type="ChEBI" id="CHEBI:15377"/>
        <dbReference type="ChEBI" id="CHEBI:77075"/>
        <dbReference type="ChEBI" id="CHEBI:77079"/>
    </reaction>
    <physiologicalReaction direction="left-to-right" evidence="11">
        <dbReference type="Rhea" id="RHEA:40256"/>
    </physiologicalReaction>
</comment>
<comment type="catalytic activity">
    <reaction evidence="11">
        <text>(3R)-hydroxyhexadecanedioyl-CoA + NAD(+) = 3-oxohexadecanedioyl-CoA + NADH + H(+)</text>
        <dbReference type="Rhea" id="RHEA:40263"/>
        <dbReference type="ChEBI" id="CHEBI:15378"/>
        <dbReference type="ChEBI" id="CHEBI:57540"/>
        <dbReference type="ChEBI" id="CHEBI:57945"/>
        <dbReference type="ChEBI" id="CHEBI:77079"/>
        <dbReference type="ChEBI" id="CHEBI:77081"/>
    </reaction>
    <physiologicalReaction direction="left-to-right" evidence="11">
        <dbReference type="Rhea" id="RHEA:40264"/>
    </physiologicalReaction>
</comment>
<comment type="catalytic activity">
    <reaction evidence="11">
        <text>(3R)-hydroxyhexadecanoyl-CoA = (2E)-hexadecenoyl-CoA + H2O</text>
        <dbReference type="Rhea" id="RHEA:39159"/>
        <dbReference type="ChEBI" id="CHEBI:15377"/>
        <dbReference type="ChEBI" id="CHEBI:61526"/>
        <dbReference type="ChEBI" id="CHEBI:74278"/>
    </reaction>
    <physiologicalReaction direction="right-to-left" evidence="11">
        <dbReference type="Rhea" id="RHEA:39161"/>
    </physiologicalReaction>
</comment>
<comment type="catalytic activity">
    <reaction evidence="6">
        <text>(3R)-3-hydroxydecanoyl-CoA = (2E)-decenoyl-CoA + H2O</text>
        <dbReference type="Rhea" id="RHEA:45992"/>
        <dbReference type="ChEBI" id="CHEBI:15377"/>
        <dbReference type="ChEBI" id="CHEBI:61406"/>
        <dbReference type="ChEBI" id="CHEBI:74272"/>
    </reaction>
    <physiologicalReaction direction="right-to-left" evidence="6">
        <dbReference type="Rhea" id="RHEA:45994"/>
    </physiologicalReaction>
</comment>
<comment type="catalytic activity">
    <reaction evidence="6">
        <text>(3R)-3-hydroxydecanoyl-CoA + NAD(+) = 3-oxodecanoyl-CoA + NADH + H(+)</text>
        <dbReference type="Rhea" id="RHEA:45832"/>
        <dbReference type="ChEBI" id="CHEBI:15378"/>
        <dbReference type="ChEBI" id="CHEBI:57540"/>
        <dbReference type="ChEBI" id="CHEBI:57945"/>
        <dbReference type="ChEBI" id="CHEBI:62548"/>
        <dbReference type="ChEBI" id="CHEBI:74272"/>
    </reaction>
    <physiologicalReaction direction="left-to-right" evidence="6">
        <dbReference type="Rhea" id="RHEA:45833"/>
    </physiologicalReaction>
</comment>
<comment type="catalytic activity">
    <reaction evidence="7 16">
        <text>(24R,25R)-3alpha,7alpha,12alpha,24-tetrahydroxy-5beta-cholestan-26-oyl-CoA + NAD(+) = 3alpha,7alpha,12alpha-trihydroxy-24-oxo-5beta-cholestan-26-oyl-CoA + NADH + H(+)</text>
        <dbReference type="Rhea" id="RHEA:47088"/>
        <dbReference type="ChEBI" id="CHEBI:15378"/>
        <dbReference type="ChEBI" id="CHEBI:57540"/>
        <dbReference type="ChEBI" id="CHEBI:57945"/>
        <dbReference type="ChEBI" id="CHEBI:58507"/>
        <dbReference type="ChEBI" id="CHEBI:59807"/>
    </reaction>
    <physiologicalReaction direction="left-to-right" evidence="7 16">
        <dbReference type="Rhea" id="RHEA:47089"/>
    </physiologicalReaction>
</comment>
<comment type="biophysicochemical properties">
    <kinetics>
        <KM evidence="15">10 uM for D-3-hydroxy-octanoyl-CoA</KM>
        <KM evidence="15">13 uM for NAD</KM>
        <KM evidence="15">2.7 uM for 3-ketooctanoyl-CoA</KM>
        <KM evidence="15">5.4 uM for NADH</KM>
        <KM evidence="11">0.9 uM for (2E)-hexadecenedioyl-CoA</KM>
        <KM evidence="11">12.8 uM for (2E)-hexadecenoyl-CoA</KM>
        <Vmax evidence="15">8.8 umol/min/mg enzyme</Vmax>
    </kinetics>
</comment>
<comment type="pathway">
    <text evidence="7 11 15 16">Lipid metabolism; fatty acid beta-oxidation.</text>
</comment>
<comment type="subunit">
    <text evidence="8 14">Homodimer.</text>
</comment>
<comment type="subcellular location">
    <subcellularLocation>
        <location evidence="20">Peroxisome</location>
    </subcellularLocation>
</comment>
<comment type="alternative products">
    <event type="alternative splicing"/>
    <isoform>
        <id>P51659-1</id>
        <name>1</name>
        <sequence type="displayed"/>
    </isoform>
    <isoform>
        <id>P51659-2</id>
        <name>2</name>
        <sequence type="described" ref="VSP_046152"/>
    </isoform>
    <isoform>
        <id>P51659-3</id>
        <name>3</name>
        <sequence type="described" ref="VSP_046153"/>
    </isoform>
</comment>
<comment type="tissue specificity">
    <text>Present in many tissues with highest concentrations in liver, heart, prostate and testis.</text>
</comment>
<comment type="disease" evidence="5 6 9 16">
    <disease id="DI-01471">
        <name>D-bifunctional protein deficiency</name>
        <acronym>DBPD</acronym>
        <description>Disorder of peroxisomal fatty acid beta-oxidation.</description>
        <dbReference type="MIM" id="261515"/>
    </disease>
    <text>The disease is caused by variants affecting the gene represented in this entry.</text>
</comment>
<comment type="disease" evidence="12">
    <disease id="DI-03133">
        <name>Perrault syndrome 1</name>
        <acronym>PRLTS1</acronym>
        <description>An autosomal recessive, sex-influenced disorder characterized by sensorineural deafness in both males and females and ovarian dysgenesis in females. Some patients also have neurologic manifestations, including mild intellectual disability and cerebellar and peripheral nervous system involvement.</description>
        <dbReference type="MIM" id="233400"/>
    </disease>
    <text>The disease is caused by variants affecting the gene represented in this entry.</text>
</comment>
<comment type="miscellaneous">
    <text>The protein is found both as a full-length peptide and in a cleaved version.</text>
</comment>
<comment type="similarity">
    <text evidence="20">Belongs to the short-chain dehydrogenases/reductases (SDR) family.</text>
</comment>
<gene>
    <name evidence="22" type="primary">HSD17B4</name>
    <name type="synonym">EDH17B4</name>
    <name type="synonym">SDR8C1</name>
</gene>